<gene>
    <name evidence="1" type="primary">ung</name>
    <name type="ordered locus">VCM66_2282</name>
</gene>
<sequence length="226" mass="25446">MSESLTWHDVIGNEKQQAYFQQTLQFVESQRQAGKVIYPPAKDVFNAFRFTEFGDVKVVILGQDPYHGPNQAHGLCFSVLPGVKTPPSLVNIYKELAQDIPGFQIPPHGYLQSWAQQGVLLLNTVLTVEQGMAHSHANTGWETFTDRVIDALNQHRNGLIFLLWGSHAQKKGQMIDRQRHHVLMAPHPSPLSAHRGFLGCRHFSKTNQLLQAQGIAPINWQPELES</sequence>
<feature type="chain" id="PRO_1000199803" description="Uracil-DNA glycosylase">
    <location>
        <begin position="1"/>
        <end position="226"/>
    </location>
</feature>
<feature type="active site" description="Proton acceptor" evidence="1">
    <location>
        <position position="64"/>
    </location>
</feature>
<evidence type="ECO:0000255" key="1">
    <source>
        <dbReference type="HAMAP-Rule" id="MF_00148"/>
    </source>
</evidence>
<keyword id="KW-0963">Cytoplasm</keyword>
<keyword id="KW-0227">DNA damage</keyword>
<keyword id="KW-0234">DNA repair</keyword>
<keyword id="KW-0378">Hydrolase</keyword>
<dbReference type="EC" id="3.2.2.27" evidence="1"/>
<dbReference type="EMBL" id="CP001233">
    <property type="protein sequence ID" value="ACP06583.1"/>
    <property type="molecule type" value="Genomic_DNA"/>
</dbReference>
<dbReference type="RefSeq" id="WP_000004496.1">
    <property type="nucleotide sequence ID" value="NC_012578.1"/>
</dbReference>
<dbReference type="SMR" id="C3LQD1"/>
<dbReference type="KEGG" id="vcm:VCM66_2282"/>
<dbReference type="HOGENOM" id="CLU_032162_3_0_6"/>
<dbReference type="Proteomes" id="UP000001217">
    <property type="component" value="Chromosome I"/>
</dbReference>
<dbReference type="GO" id="GO:0005737">
    <property type="term" value="C:cytoplasm"/>
    <property type="evidence" value="ECO:0007669"/>
    <property type="project" value="UniProtKB-SubCell"/>
</dbReference>
<dbReference type="GO" id="GO:0004844">
    <property type="term" value="F:uracil DNA N-glycosylase activity"/>
    <property type="evidence" value="ECO:0007669"/>
    <property type="project" value="UniProtKB-UniRule"/>
</dbReference>
<dbReference type="GO" id="GO:0097510">
    <property type="term" value="P:base-excision repair, AP site formation via deaminated base removal"/>
    <property type="evidence" value="ECO:0007669"/>
    <property type="project" value="TreeGrafter"/>
</dbReference>
<dbReference type="CDD" id="cd10027">
    <property type="entry name" value="UDG-F1-like"/>
    <property type="match status" value="1"/>
</dbReference>
<dbReference type="FunFam" id="3.40.470.10:FF:000001">
    <property type="entry name" value="Uracil-DNA glycosylase"/>
    <property type="match status" value="1"/>
</dbReference>
<dbReference type="Gene3D" id="3.40.470.10">
    <property type="entry name" value="Uracil-DNA glycosylase-like domain"/>
    <property type="match status" value="1"/>
</dbReference>
<dbReference type="HAMAP" id="MF_00148">
    <property type="entry name" value="UDG"/>
    <property type="match status" value="1"/>
</dbReference>
<dbReference type="InterPro" id="IPR002043">
    <property type="entry name" value="UDG_fam1"/>
</dbReference>
<dbReference type="InterPro" id="IPR018085">
    <property type="entry name" value="Ura-DNA_Glyclase_AS"/>
</dbReference>
<dbReference type="InterPro" id="IPR005122">
    <property type="entry name" value="Uracil-DNA_glycosylase-like"/>
</dbReference>
<dbReference type="InterPro" id="IPR036895">
    <property type="entry name" value="Uracil-DNA_glycosylase-like_sf"/>
</dbReference>
<dbReference type="NCBIfam" id="NF003588">
    <property type="entry name" value="PRK05254.1-1"/>
    <property type="match status" value="1"/>
</dbReference>
<dbReference type="NCBIfam" id="NF003589">
    <property type="entry name" value="PRK05254.1-2"/>
    <property type="match status" value="1"/>
</dbReference>
<dbReference type="NCBIfam" id="NF003591">
    <property type="entry name" value="PRK05254.1-4"/>
    <property type="match status" value="1"/>
</dbReference>
<dbReference type="NCBIfam" id="NF003592">
    <property type="entry name" value="PRK05254.1-5"/>
    <property type="match status" value="1"/>
</dbReference>
<dbReference type="NCBIfam" id="TIGR00628">
    <property type="entry name" value="ung"/>
    <property type="match status" value="1"/>
</dbReference>
<dbReference type="PANTHER" id="PTHR11264">
    <property type="entry name" value="URACIL-DNA GLYCOSYLASE"/>
    <property type="match status" value="1"/>
</dbReference>
<dbReference type="PANTHER" id="PTHR11264:SF0">
    <property type="entry name" value="URACIL-DNA GLYCOSYLASE"/>
    <property type="match status" value="1"/>
</dbReference>
<dbReference type="Pfam" id="PF03167">
    <property type="entry name" value="UDG"/>
    <property type="match status" value="1"/>
</dbReference>
<dbReference type="SMART" id="SM00986">
    <property type="entry name" value="UDG"/>
    <property type="match status" value="1"/>
</dbReference>
<dbReference type="SMART" id="SM00987">
    <property type="entry name" value="UreE_C"/>
    <property type="match status" value="1"/>
</dbReference>
<dbReference type="SUPFAM" id="SSF52141">
    <property type="entry name" value="Uracil-DNA glycosylase-like"/>
    <property type="match status" value="1"/>
</dbReference>
<dbReference type="PROSITE" id="PS00130">
    <property type="entry name" value="U_DNA_GLYCOSYLASE"/>
    <property type="match status" value="1"/>
</dbReference>
<protein>
    <recommendedName>
        <fullName evidence="1">Uracil-DNA glycosylase</fullName>
        <shortName evidence="1">UDG</shortName>
        <ecNumber evidence="1">3.2.2.27</ecNumber>
    </recommendedName>
</protein>
<comment type="function">
    <text evidence="1">Excises uracil residues from the DNA which can arise as a result of misincorporation of dUMP residues by DNA polymerase or due to deamination of cytosine.</text>
</comment>
<comment type="catalytic activity">
    <reaction evidence="1">
        <text>Hydrolyzes single-stranded DNA or mismatched double-stranded DNA and polynucleotides, releasing free uracil.</text>
        <dbReference type="EC" id="3.2.2.27"/>
    </reaction>
</comment>
<comment type="subcellular location">
    <subcellularLocation>
        <location evidence="1">Cytoplasm</location>
    </subcellularLocation>
</comment>
<comment type="similarity">
    <text evidence="1">Belongs to the uracil-DNA glycosylase (UDG) superfamily. UNG family.</text>
</comment>
<name>UNG_VIBCM</name>
<organism>
    <name type="scientific">Vibrio cholerae serotype O1 (strain M66-2)</name>
    <dbReference type="NCBI Taxonomy" id="579112"/>
    <lineage>
        <taxon>Bacteria</taxon>
        <taxon>Pseudomonadati</taxon>
        <taxon>Pseudomonadota</taxon>
        <taxon>Gammaproteobacteria</taxon>
        <taxon>Vibrionales</taxon>
        <taxon>Vibrionaceae</taxon>
        <taxon>Vibrio</taxon>
    </lineage>
</organism>
<proteinExistence type="inferred from homology"/>
<reference key="1">
    <citation type="journal article" date="2008" name="PLoS ONE">
        <title>A recalibrated molecular clock and independent origins for the cholera pandemic clones.</title>
        <authorList>
            <person name="Feng L."/>
            <person name="Reeves P.R."/>
            <person name="Lan R."/>
            <person name="Ren Y."/>
            <person name="Gao C."/>
            <person name="Zhou Z."/>
            <person name="Ren Y."/>
            <person name="Cheng J."/>
            <person name="Wang W."/>
            <person name="Wang J."/>
            <person name="Qian W."/>
            <person name="Li D."/>
            <person name="Wang L."/>
        </authorList>
    </citation>
    <scope>NUCLEOTIDE SEQUENCE [LARGE SCALE GENOMIC DNA]</scope>
    <source>
        <strain>M66-2</strain>
    </source>
</reference>
<accession>C3LQD1</accession>